<evidence type="ECO:0000255" key="1">
    <source>
        <dbReference type="HAMAP-Rule" id="MF_00011"/>
    </source>
</evidence>
<organism>
    <name type="scientific">Picosynechococcus sp. (strain ATCC 27264 / PCC 7002 / PR-6)</name>
    <name type="common">Agmenellum quadruplicatum</name>
    <dbReference type="NCBI Taxonomy" id="32049"/>
    <lineage>
        <taxon>Bacteria</taxon>
        <taxon>Bacillati</taxon>
        <taxon>Cyanobacteriota</taxon>
        <taxon>Cyanophyceae</taxon>
        <taxon>Oscillatoriophycideae</taxon>
        <taxon>Chroococcales</taxon>
        <taxon>Geminocystaceae</taxon>
        <taxon>Picosynechococcus</taxon>
    </lineage>
</organism>
<gene>
    <name evidence="1" type="primary">purA</name>
    <name type="ordered locus">SYNPCC7002_A0882</name>
</gene>
<keyword id="KW-0963">Cytoplasm</keyword>
<keyword id="KW-0342">GTP-binding</keyword>
<keyword id="KW-0436">Ligase</keyword>
<keyword id="KW-0460">Magnesium</keyword>
<keyword id="KW-0479">Metal-binding</keyword>
<keyword id="KW-0547">Nucleotide-binding</keyword>
<keyword id="KW-0658">Purine biosynthesis</keyword>
<keyword id="KW-1185">Reference proteome</keyword>
<dbReference type="EC" id="6.3.4.4" evidence="1"/>
<dbReference type="EMBL" id="CP000951">
    <property type="protein sequence ID" value="ACA98886.1"/>
    <property type="molecule type" value="Genomic_DNA"/>
</dbReference>
<dbReference type="RefSeq" id="WP_012306510.1">
    <property type="nucleotide sequence ID" value="NZ_JAHHPU010000001.1"/>
</dbReference>
<dbReference type="SMR" id="B1XIL5"/>
<dbReference type="STRING" id="32049.SYNPCC7002_A0882"/>
<dbReference type="KEGG" id="syp:SYNPCC7002_A0882"/>
<dbReference type="eggNOG" id="COG0104">
    <property type="taxonomic scope" value="Bacteria"/>
</dbReference>
<dbReference type="HOGENOM" id="CLU_029848_0_0_3"/>
<dbReference type="UniPathway" id="UPA00075">
    <property type="reaction ID" value="UER00335"/>
</dbReference>
<dbReference type="Proteomes" id="UP000001688">
    <property type="component" value="Chromosome"/>
</dbReference>
<dbReference type="GO" id="GO:0005737">
    <property type="term" value="C:cytoplasm"/>
    <property type="evidence" value="ECO:0007669"/>
    <property type="project" value="UniProtKB-SubCell"/>
</dbReference>
<dbReference type="GO" id="GO:0004019">
    <property type="term" value="F:adenylosuccinate synthase activity"/>
    <property type="evidence" value="ECO:0007669"/>
    <property type="project" value="UniProtKB-UniRule"/>
</dbReference>
<dbReference type="GO" id="GO:0005525">
    <property type="term" value="F:GTP binding"/>
    <property type="evidence" value="ECO:0007669"/>
    <property type="project" value="UniProtKB-UniRule"/>
</dbReference>
<dbReference type="GO" id="GO:0000287">
    <property type="term" value="F:magnesium ion binding"/>
    <property type="evidence" value="ECO:0007669"/>
    <property type="project" value="UniProtKB-UniRule"/>
</dbReference>
<dbReference type="GO" id="GO:0044208">
    <property type="term" value="P:'de novo' AMP biosynthetic process"/>
    <property type="evidence" value="ECO:0007669"/>
    <property type="project" value="UniProtKB-UniRule"/>
</dbReference>
<dbReference type="GO" id="GO:0046040">
    <property type="term" value="P:IMP metabolic process"/>
    <property type="evidence" value="ECO:0007669"/>
    <property type="project" value="TreeGrafter"/>
</dbReference>
<dbReference type="CDD" id="cd03108">
    <property type="entry name" value="AdSS"/>
    <property type="match status" value="1"/>
</dbReference>
<dbReference type="FunFam" id="1.10.300.10:FF:000001">
    <property type="entry name" value="Adenylosuccinate synthetase"/>
    <property type="match status" value="1"/>
</dbReference>
<dbReference type="FunFam" id="3.90.170.10:FF:000001">
    <property type="entry name" value="Adenylosuccinate synthetase"/>
    <property type="match status" value="1"/>
</dbReference>
<dbReference type="Gene3D" id="3.40.440.10">
    <property type="entry name" value="Adenylosuccinate Synthetase, subunit A, domain 1"/>
    <property type="match status" value="1"/>
</dbReference>
<dbReference type="Gene3D" id="1.10.300.10">
    <property type="entry name" value="Adenylosuccinate Synthetase, subunit A, domain 2"/>
    <property type="match status" value="1"/>
</dbReference>
<dbReference type="Gene3D" id="3.90.170.10">
    <property type="entry name" value="Adenylosuccinate Synthetase, subunit A, domain 3"/>
    <property type="match status" value="1"/>
</dbReference>
<dbReference type="HAMAP" id="MF_00011">
    <property type="entry name" value="Adenylosucc_synth"/>
    <property type="match status" value="1"/>
</dbReference>
<dbReference type="InterPro" id="IPR018220">
    <property type="entry name" value="Adenylosuccin_syn_GTP-bd"/>
</dbReference>
<dbReference type="InterPro" id="IPR033128">
    <property type="entry name" value="Adenylosuccin_syn_Lys_AS"/>
</dbReference>
<dbReference type="InterPro" id="IPR042109">
    <property type="entry name" value="Adenylosuccinate_synth_dom1"/>
</dbReference>
<dbReference type="InterPro" id="IPR042110">
    <property type="entry name" value="Adenylosuccinate_synth_dom2"/>
</dbReference>
<dbReference type="InterPro" id="IPR042111">
    <property type="entry name" value="Adenylosuccinate_synth_dom3"/>
</dbReference>
<dbReference type="InterPro" id="IPR001114">
    <property type="entry name" value="Adenylosuccinate_synthetase"/>
</dbReference>
<dbReference type="InterPro" id="IPR027417">
    <property type="entry name" value="P-loop_NTPase"/>
</dbReference>
<dbReference type="NCBIfam" id="NF002223">
    <property type="entry name" value="PRK01117.1"/>
    <property type="match status" value="1"/>
</dbReference>
<dbReference type="NCBIfam" id="TIGR00184">
    <property type="entry name" value="purA"/>
    <property type="match status" value="1"/>
</dbReference>
<dbReference type="PANTHER" id="PTHR11846">
    <property type="entry name" value="ADENYLOSUCCINATE SYNTHETASE"/>
    <property type="match status" value="1"/>
</dbReference>
<dbReference type="PANTHER" id="PTHR11846:SF0">
    <property type="entry name" value="ADENYLOSUCCINATE SYNTHETASE"/>
    <property type="match status" value="1"/>
</dbReference>
<dbReference type="Pfam" id="PF00709">
    <property type="entry name" value="Adenylsucc_synt"/>
    <property type="match status" value="1"/>
</dbReference>
<dbReference type="SMART" id="SM00788">
    <property type="entry name" value="Adenylsucc_synt"/>
    <property type="match status" value="1"/>
</dbReference>
<dbReference type="SUPFAM" id="SSF52540">
    <property type="entry name" value="P-loop containing nucleoside triphosphate hydrolases"/>
    <property type="match status" value="1"/>
</dbReference>
<dbReference type="PROSITE" id="PS01266">
    <property type="entry name" value="ADENYLOSUCCIN_SYN_1"/>
    <property type="match status" value="1"/>
</dbReference>
<dbReference type="PROSITE" id="PS00513">
    <property type="entry name" value="ADENYLOSUCCIN_SYN_2"/>
    <property type="match status" value="1"/>
</dbReference>
<reference key="1">
    <citation type="submission" date="2008-02" db="EMBL/GenBank/DDBJ databases">
        <title>Complete sequence of Synechococcus sp. PCC 7002.</title>
        <authorList>
            <person name="Li T."/>
            <person name="Zhao J."/>
            <person name="Zhao C."/>
            <person name="Liu Z."/>
            <person name="Zhao F."/>
            <person name="Marquardt J."/>
            <person name="Nomura C.T."/>
            <person name="Persson S."/>
            <person name="Detter J.C."/>
            <person name="Richardson P.M."/>
            <person name="Lanz C."/>
            <person name="Schuster S.C."/>
            <person name="Wang J."/>
            <person name="Li S."/>
            <person name="Huang X."/>
            <person name="Cai T."/>
            <person name="Yu Z."/>
            <person name="Luo J."/>
            <person name="Zhao J."/>
            <person name="Bryant D.A."/>
        </authorList>
    </citation>
    <scope>NUCLEOTIDE SEQUENCE [LARGE SCALE GENOMIC DNA]</scope>
    <source>
        <strain>ATCC 27264 / PCC 7002 / PR-6</strain>
    </source>
</reference>
<feature type="chain" id="PRO_1000089345" description="Adenylosuccinate synthetase">
    <location>
        <begin position="1"/>
        <end position="443"/>
    </location>
</feature>
<feature type="active site" description="Proton acceptor" evidence="1">
    <location>
        <position position="13"/>
    </location>
</feature>
<feature type="active site" description="Proton donor" evidence="1">
    <location>
        <position position="41"/>
    </location>
</feature>
<feature type="binding site" evidence="1">
    <location>
        <begin position="12"/>
        <end position="18"/>
    </location>
    <ligand>
        <name>GTP</name>
        <dbReference type="ChEBI" id="CHEBI:37565"/>
    </ligand>
</feature>
<feature type="binding site" description="in other chain" evidence="1">
    <location>
        <begin position="13"/>
        <end position="16"/>
    </location>
    <ligand>
        <name>IMP</name>
        <dbReference type="ChEBI" id="CHEBI:58053"/>
        <note>ligand shared between dimeric partners</note>
    </ligand>
</feature>
<feature type="binding site" evidence="1">
    <location>
        <position position="13"/>
    </location>
    <ligand>
        <name>Mg(2+)</name>
        <dbReference type="ChEBI" id="CHEBI:18420"/>
    </ligand>
</feature>
<feature type="binding site" description="in other chain" evidence="1">
    <location>
        <begin position="38"/>
        <end position="41"/>
    </location>
    <ligand>
        <name>IMP</name>
        <dbReference type="ChEBI" id="CHEBI:58053"/>
        <note>ligand shared between dimeric partners</note>
    </ligand>
</feature>
<feature type="binding site" evidence="1">
    <location>
        <begin position="40"/>
        <end position="42"/>
    </location>
    <ligand>
        <name>GTP</name>
        <dbReference type="ChEBI" id="CHEBI:37565"/>
    </ligand>
</feature>
<feature type="binding site" evidence="1">
    <location>
        <position position="40"/>
    </location>
    <ligand>
        <name>Mg(2+)</name>
        <dbReference type="ChEBI" id="CHEBI:18420"/>
    </ligand>
</feature>
<feature type="binding site" description="in other chain" evidence="1">
    <location>
        <position position="128"/>
    </location>
    <ligand>
        <name>IMP</name>
        <dbReference type="ChEBI" id="CHEBI:58053"/>
        <note>ligand shared between dimeric partners</note>
    </ligand>
</feature>
<feature type="binding site" evidence="1">
    <location>
        <position position="142"/>
    </location>
    <ligand>
        <name>IMP</name>
        <dbReference type="ChEBI" id="CHEBI:58053"/>
        <note>ligand shared between dimeric partners</note>
    </ligand>
</feature>
<feature type="binding site" description="in other chain" evidence="1">
    <location>
        <position position="223"/>
    </location>
    <ligand>
        <name>IMP</name>
        <dbReference type="ChEBI" id="CHEBI:58053"/>
        <note>ligand shared between dimeric partners</note>
    </ligand>
</feature>
<feature type="binding site" description="in other chain" evidence="1">
    <location>
        <position position="238"/>
    </location>
    <ligand>
        <name>IMP</name>
        <dbReference type="ChEBI" id="CHEBI:58053"/>
        <note>ligand shared between dimeric partners</note>
    </ligand>
</feature>
<feature type="binding site" evidence="1">
    <location>
        <begin position="298"/>
        <end position="304"/>
    </location>
    <ligand>
        <name>substrate</name>
    </ligand>
</feature>
<feature type="binding site" description="in other chain" evidence="1">
    <location>
        <position position="302"/>
    </location>
    <ligand>
        <name>IMP</name>
        <dbReference type="ChEBI" id="CHEBI:58053"/>
        <note>ligand shared between dimeric partners</note>
    </ligand>
</feature>
<feature type="binding site" evidence="1">
    <location>
        <position position="304"/>
    </location>
    <ligand>
        <name>GTP</name>
        <dbReference type="ChEBI" id="CHEBI:37565"/>
    </ligand>
</feature>
<feature type="binding site" evidence="1">
    <location>
        <begin position="330"/>
        <end position="332"/>
    </location>
    <ligand>
        <name>GTP</name>
        <dbReference type="ChEBI" id="CHEBI:37565"/>
    </ligand>
</feature>
<feature type="binding site" evidence="1">
    <location>
        <begin position="412"/>
        <end position="414"/>
    </location>
    <ligand>
        <name>GTP</name>
        <dbReference type="ChEBI" id="CHEBI:37565"/>
    </ligand>
</feature>
<comment type="function">
    <text evidence="1">Plays an important role in the de novo pathway of purine nucleotide biosynthesis. Catalyzes the first committed step in the biosynthesis of AMP from IMP.</text>
</comment>
<comment type="catalytic activity">
    <reaction evidence="1">
        <text>IMP + L-aspartate + GTP = N(6)-(1,2-dicarboxyethyl)-AMP + GDP + phosphate + 2 H(+)</text>
        <dbReference type="Rhea" id="RHEA:15753"/>
        <dbReference type="ChEBI" id="CHEBI:15378"/>
        <dbReference type="ChEBI" id="CHEBI:29991"/>
        <dbReference type="ChEBI" id="CHEBI:37565"/>
        <dbReference type="ChEBI" id="CHEBI:43474"/>
        <dbReference type="ChEBI" id="CHEBI:57567"/>
        <dbReference type="ChEBI" id="CHEBI:58053"/>
        <dbReference type="ChEBI" id="CHEBI:58189"/>
        <dbReference type="EC" id="6.3.4.4"/>
    </reaction>
</comment>
<comment type="cofactor">
    <cofactor evidence="1">
        <name>Mg(2+)</name>
        <dbReference type="ChEBI" id="CHEBI:18420"/>
    </cofactor>
    <text evidence="1">Binds 1 Mg(2+) ion per subunit.</text>
</comment>
<comment type="pathway">
    <text evidence="1">Purine metabolism; AMP biosynthesis via de novo pathway; AMP from IMP: step 1/2.</text>
</comment>
<comment type="subunit">
    <text evidence="1">Homodimer.</text>
</comment>
<comment type="subcellular location">
    <subcellularLocation>
        <location evidence="1">Cytoplasm</location>
    </subcellularLocation>
</comment>
<comment type="similarity">
    <text evidence="1">Belongs to the adenylosuccinate synthetase family.</text>
</comment>
<proteinExistence type="inferred from homology"/>
<name>PURA_PICP2</name>
<accession>B1XIL5</accession>
<sequence>MANVVVIGAQWGDEGKGKITDLLSKSADVVVRSQGGVNAGHTVVVQGQTFKLHLIPSGILYPDTECIIGSGTVIDPKVLLEEIDQLHRLNVSTENLFISQTAHVTMPYHRLIDGASEEMRGDRKIGTTGRGIGPTYADKSERTGVRVLDLMDLDNSQDKFVWAIKYKNVILEKLYDLPPLDPQEVIEEYRAYADALRPHVVDSSLKVFEGVNAKKNILFEGAQGTLLDIDHGTYPYVTSSNPIAGGACVGAGIGPTIIDRVIGVAKAYTTRVGEGPFPTELDDEIGELLGHVGAEFGTTTGRRRRCGWFDAVIGRYAARINGLDCLAITKLDVLDSLDEIKVCVAYEIDGEACEHFPSNANLFARCQPIYKTMPGWKQPTSDCRSLDELPKEALAYLKFLAELMDVPIAIVSLGAGREQTIIVEDPIHGPKRALLDRNGEPIG</sequence>
<protein>
    <recommendedName>
        <fullName evidence="1">Adenylosuccinate synthetase</fullName>
        <shortName evidence="1">AMPSase</shortName>
        <shortName evidence="1">AdSS</shortName>
        <ecNumber evidence="1">6.3.4.4</ecNumber>
    </recommendedName>
    <alternativeName>
        <fullName evidence="1">IMP--aspartate ligase</fullName>
    </alternativeName>
</protein>